<name>RL25_XYLFM</name>
<comment type="function">
    <text evidence="1">This is one of the proteins that binds to the 5S RNA in the ribosome where it forms part of the central protuberance.</text>
</comment>
<comment type="subunit">
    <text evidence="1">Part of the 50S ribosomal subunit; part of the 5S rRNA/L5/L18/L25 subcomplex. Contacts the 5S rRNA. Binds to the 5S rRNA independently of L5 and L18.</text>
</comment>
<comment type="similarity">
    <text evidence="1">Belongs to the bacterial ribosomal protein bL25 family. CTC subfamily.</text>
</comment>
<keyword id="KW-0687">Ribonucleoprotein</keyword>
<keyword id="KW-0689">Ribosomal protein</keyword>
<keyword id="KW-0694">RNA-binding</keyword>
<keyword id="KW-0699">rRNA-binding</keyword>
<dbReference type="EMBL" id="CP000941">
    <property type="protein sequence ID" value="ACA13059.1"/>
    <property type="molecule type" value="Genomic_DNA"/>
</dbReference>
<dbReference type="RefSeq" id="WP_004084700.1">
    <property type="nucleotide sequence ID" value="NC_010513.1"/>
</dbReference>
<dbReference type="SMR" id="B0U5Y7"/>
<dbReference type="KEGG" id="xfm:Xfasm12_2206"/>
<dbReference type="HOGENOM" id="CLU_075939_0_1_6"/>
<dbReference type="GO" id="GO:0022625">
    <property type="term" value="C:cytosolic large ribosomal subunit"/>
    <property type="evidence" value="ECO:0007669"/>
    <property type="project" value="TreeGrafter"/>
</dbReference>
<dbReference type="GO" id="GO:0008097">
    <property type="term" value="F:5S rRNA binding"/>
    <property type="evidence" value="ECO:0007669"/>
    <property type="project" value="InterPro"/>
</dbReference>
<dbReference type="GO" id="GO:0003735">
    <property type="term" value="F:structural constituent of ribosome"/>
    <property type="evidence" value="ECO:0007669"/>
    <property type="project" value="InterPro"/>
</dbReference>
<dbReference type="GO" id="GO:0006412">
    <property type="term" value="P:translation"/>
    <property type="evidence" value="ECO:0007669"/>
    <property type="project" value="UniProtKB-UniRule"/>
</dbReference>
<dbReference type="CDD" id="cd00495">
    <property type="entry name" value="Ribosomal_L25_TL5_CTC"/>
    <property type="match status" value="1"/>
</dbReference>
<dbReference type="FunFam" id="2.40.240.10:FF:000002">
    <property type="entry name" value="50S ribosomal protein L25"/>
    <property type="match status" value="1"/>
</dbReference>
<dbReference type="Gene3D" id="2.170.120.20">
    <property type="entry name" value="Ribosomal protein L25, beta domain"/>
    <property type="match status" value="1"/>
</dbReference>
<dbReference type="Gene3D" id="2.40.240.10">
    <property type="entry name" value="Ribosomal Protein L25, Chain P"/>
    <property type="match status" value="1"/>
</dbReference>
<dbReference type="HAMAP" id="MF_01336">
    <property type="entry name" value="Ribosomal_bL25"/>
    <property type="match status" value="1"/>
</dbReference>
<dbReference type="HAMAP" id="MF_01334">
    <property type="entry name" value="Ribosomal_bL25_CTC"/>
    <property type="match status" value="1"/>
</dbReference>
<dbReference type="InterPro" id="IPR020056">
    <property type="entry name" value="Rbsml_bL25/Gln-tRNA_synth_N"/>
</dbReference>
<dbReference type="InterPro" id="IPR011035">
    <property type="entry name" value="Ribosomal_bL25/Gln-tRNA_synth"/>
</dbReference>
<dbReference type="InterPro" id="IPR020057">
    <property type="entry name" value="Ribosomal_bL25_b-dom"/>
</dbReference>
<dbReference type="InterPro" id="IPR037121">
    <property type="entry name" value="Ribosomal_bL25_C"/>
</dbReference>
<dbReference type="InterPro" id="IPR001021">
    <property type="entry name" value="Ribosomal_bL25_long"/>
</dbReference>
<dbReference type="InterPro" id="IPR020055">
    <property type="entry name" value="Ribosomal_bL25_short"/>
</dbReference>
<dbReference type="InterPro" id="IPR029751">
    <property type="entry name" value="Ribosomal_L25_dom"/>
</dbReference>
<dbReference type="InterPro" id="IPR020930">
    <property type="entry name" value="Ribosomal_uL5_bac-type"/>
</dbReference>
<dbReference type="NCBIfam" id="TIGR00731">
    <property type="entry name" value="bL25_bact_ctc"/>
    <property type="match status" value="1"/>
</dbReference>
<dbReference type="NCBIfam" id="NF004128">
    <property type="entry name" value="PRK05618.1-2"/>
    <property type="match status" value="1"/>
</dbReference>
<dbReference type="NCBIfam" id="NF004130">
    <property type="entry name" value="PRK05618.1-5"/>
    <property type="match status" value="1"/>
</dbReference>
<dbReference type="NCBIfam" id="NF004612">
    <property type="entry name" value="PRK05943.1"/>
    <property type="match status" value="1"/>
</dbReference>
<dbReference type="PANTHER" id="PTHR33284">
    <property type="entry name" value="RIBOSOMAL PROTEIN L25/GLN-TRNA SYNTHETASE, ANTI-CODON-BINDING DOMAIN-CONTAINING PROTEIN"/>
    <property type="match status" value="1"/>
</dbReference>
<dbReference type="PANTHER" id="PTHR33284:SF1">
    <property type="entry name" value="RIBOSOMAL PROTEIN L25_GLN-TRNA SYNTHETASE, ANTI-CODON-BINDING DOMAIN-CONTAINING PROTEIN"/>
    <property type="match status" value="1"/>
</dbReference>
<dbReference type="Pfam" id="PF01386">
    <property type="entry name" value="Ribosomal_L25p"/>
    <property type="match status" value="1"/>
</dbReference>
<dbReference type="Pfam" id="PF14693">
    <property type="entry name" value="Ribosomal_TL5_C"/>
    <property type="match status" value="1"/>
</dbReference>
<dbReference type="SUPFAM" id="SSF50715">
    <property type="entry name" value="Ribosomal protein L25-like"/>
    <property type="match status" value="1"/>
</dbReference>
<accession>B0U5Y7</accession>
<organism>
    <name type="scientific">Xylella fastidiosa (strain M12)</name>
    <dbReference type="NCBI Taxonomy" id="405440"/>
    <lineage>
        <taxon>Bacteria</taxon>
        <taxon>Pseudomonadati</taxon>
        <taxon>Pseudomonadota</taxon>
        <taxon>Gammaproteobacteria</taxon>
        <taxon>Lysobacterales</taxon>
        <taxon>Lysobacteraceae</taxon>
        <taxon>Xylella</taxon>
    </lineage>
</organism>
<sequence length="207" mass="22915">MANHQIKAQRRKDEGKGASRRLRHAGMIPAIIYGGDQRPVSIQLNHEQIWLAQQNEWFYSSILDLNVDGGGGEKVLLRDLQRHPYRQLVMHVDFQRVSSDAKLSVAVPLHFINQATSPAGKAGGVVITHELNEVQVSCLPKDLPEFIEVDLSTLNVGHVIHLSDITFPIGVELSTRLDKEHDMAVVIAKHAVIEDDAPAEEGEGDSK</sequence>
<protein>
    <recommendedName>
        <fullName evidence="1">Large ribosomal subunit protein bL25</fullName>
    </recommendedName>
    <alternativeName>
        <fullName evidence="3">50S ribosomal protein L25</fullName>
    </alternativeName>
    <alternativeName>
        <fullName evidence="1">General stress protein CTC</fullName>
    </alternativeName>
</protein>
<proteinExistence type="inferred from homology"/>
<feature type="chain" id="PRO_1000142566" description="Large ribosomal subunit protein bL25">
    <location>
        <begin position="1"/>
        <end position="207"/>
    </location>
</feature>
<feature type="region of interest" description="Disordered" evidence="2">
    <location>
        <begin position="1"/>
        <end position="20"/>
    </location>
</feature>
<evidence type="ECO:0000255" key="1">
    <source>
        <dbReference type="HAMAP-Rule" id="MF_01334"/>
    </source>
</evidence>
<evidence type="ECO:0000256" key="2">
    <source>
        <dbReference type="SAM" id="MobiDB-lite"/>
    </source>
</evidence>
<evidence type="ECO:0000305" key="3"/>
<gene>
    <name evidence="1" type="primary">rplY</name>
    <name evidence="1" type="synonym">ctc</name>
    <name type="ordered locus">Xfasm12_2206</name>
</gene>
<reference key="1">
    <citation type="journal article" date="2010" name="J. Bacteriol.">
        <title>Whole genome sequences of two Xylella fastidiosa strains (M12 and M23) causing almond leaf scorch disease in California.</title>
        <authorList>
            <person name="Chen J."/>
            <person name="Xie G."/>
            <person name="Han S."/>
            <person name="Chertkov O."/>
            <person name="Sims D."/>
            <person name="Civerolo E.L."/>
        </authorList>
    </citation>
    <scope>NUCLEOTIDE SEQUENCE [LARGE SCALE GENOMIC DNA]</scope>
    <source>
        <strain>M12</strain>
    </source>
</reference>